<name>MORN_ANTEL</name>
<evidence type="ECO:0000250" key="1"/>
<evidence type="ECO:0000269" key="2">
    <source>
    </source>
</evidence>
<evidence type="ECO:0000305" key="3"/>
<keyword id="KW-0131">Cell cycle</keyword>
<keyword id="KW-0132">Cell division</keyword>
<keyword id="KW-0903">Direct protein sequencing</keyword>
<keyword id="KW-0339">Growth factor</keyword>
<keyword id="KW-0498">Mitosis</keyword>
<keyword id="KW-0873">Pyrrolidone carboxylic acid</keyword>
<organism>
    <name type="scientific">Anthopleura elegantissima</name>
    <name type="common">Green aggregating anemone</name>
    <name type="synonym">Actinia elegantissima</name>
    <dbReference type="NCBI Taxonomy" id="6110"/>
    <lineage>
        <taxon>Eukaryota</taxon>
        <taxon>Metazoa</taxon>
        <taxon>Cnidaria</taxon>
        <taxon>Anthozoa</taxon>
        <taxon>Hexacorallia</taxon>
        <taxon>Actiniaria</taxon>
        <taxon>Actiniidae</taxon>
        <taxon>Anthopleura</taxon>
    </lineage>
</organism>
<feature type="peptide" id="PRO_0000044165" description="Morphogenetic neuropeptide">
    <location>
        <begin position="1"/>
        <end position="11"/>
    </location>
</feature>
<feature type="modified residue" description="Pyrrolidone carboxylic acid" evidence="2">
    <location>
        <position position="1"/>
    </location>
</feature>
<dbReference type="PIR" id="A93900">
    <property type="entry name" value="YHXAE"/>
</dbReference>
<dbReference type="GO" id="GO:0008083">
    <property type="term" value="F:growth factor activity"/>
    <property type="evidence" value="ECO:0007669"/>
    <property type="project" value="UniProtKB-KW"/>
</dbReference>
<dbReference type="GO" id="GO:0051301">
    <property type="term" value="P:cell division"/>
    <property type="evidence" value="ECO:0007669"/>
    <property type="project" value="UniProtKB-KW"/>
</dbReference>
<reference key="1">
    <citation type="journal article" date="1981" name="Proc. Natl. Acad. Sci. U.S.A.">
        <title>Isolation and amino acid sequence of a morphogenetic peptide from hydra.</title>
        <authorList>
            <person name="Schaller H.C."/>
            <person name="Bodenmuller H."/>
        </authorList>
    </citation>
    <scope>PROTEIN SEQUENCE</scope>
    <scope>PYROGLUTAMATE FORMATION AT GLN-1</scope>
</reference>
<reference key="2">
    <citation type="journal article" date="1981" name="FEBS Lett.">
        <title>Synthesis of a new neuropeptide, the head activator from hydra.</title>
        <authorList>
            <person name="Birr C."/>
            <person name="Zachmann B."/>
            <person name="Bodenmuller H."/>
            <person name="Schaller H.C."/>
        </authorList>
    </citation>
    <scope>SYNTHESIS</scope>
</reference>
<accession>P69207</accession>
<accession>P01163</accession>
<protein>
    <recommendedName>
        <fullName>Morphogenetic neuropeptide</fullName>
    </recommendedName>
    <alternativeName>
        <fullName>Head activator</fullName>
        <shortName>HA</shortName>
    </alternativeName>
</protein>
<comment type="function">
    <text evidence="1">HA acts as an autocrine growth factor for neural cells in the G2/mitosis transition.</text>
</comment>
<comment type="caution">
    <text evidence="3">This peptide was first isolated from nerve cells of hydra and was called head activator by the authors, because it induced head-specific growth and differentiation in this animal. It has been found in mammalian intestine and hypothalamus.</text>
</comment>
<proteinExistence type="evidence at protein level"/>
<sequence length="11" mass="1142">QPPGGSKVILF</sequence>